<accession>Q5HIS7</accession>
<name>RS18_STAAC</name>
<dbReference type="EMBL" id="CP000046">
    <property type="protein sequence ID" value="AAW38907.1"/>
    <property type="molecule type" value="Genomic_DNA"/>
</dbReference>
<dbReference type="RefSeq" id="WP_000897044.1">
    <property type="nucleotide sequence ID" value="NZ_JBGOFO010000001.1"/>
</dbReference>
<dbReference type="SMR" id="Q5HIS7"/>
<dbReference type="GeneID" id="98344693"/>
<dbReference type="KEGG" id="sac:SACOL0439"/>
<dbReference type="HOGENOM" id="CLU_148710_2_2_9"/>
<dbReference type="Proteomes" id="UP000000530">
    <property type="component" value="Chromosome"/>
</dbReference>
<dbReference type="GO" id="GO:0022627">
    <property type="term" value="C:cytosolic small ribosomal subunit"/>
    <property type="evidence" value="ECO:0007669"/>
    <property type="project" value="TreeGrafter"/>
</dbReference>
<dbReference type="GO" id="GO:0070181">
    <property type="term" value="F:small ribosomal subunit rRNA binding"/>
    <property type="evidence" value="ECO:0007669"/>
    <property type="project" value="TreeGrafter"/>
</dbReference>
<dbReference type="GO" id="GO:0003735">
    <property type="term" value="F:structural constituent of ribosome"/>
    <property type="evidence" value="ECO:0007669"/>
    <property type="project" value="InterPro"/>
</dbReference>
<dbReference type="GO" id="GO:0006412">
    <property type="term" value="P:translation"/>
    <property type="evidence" value="ECO:0007669"/>
    <property type="project" value="UniProtKB-UniRule"/>
</dbReference>
<dbReference type="FunFam" id="4.10.640.10:FF:000003">
    <property type="entry name" value="30S ribosomal protein S18"/>
    <property type="match status" value="1"/>
</dbReference>
<dbReference type="Gene3D" id="4.10.640.10">
    <property type="entry name" value="Ribosomal protein S18"/>
    <property type="match status" value="1"/>
</dbReference>
<dbReference type="HAMAP" id="MF_00270">
    <property type="entry name" value="Ribosomal_bS18"/>
    <property type="match status" value="1"/>
</dbReference>
<dbReference type="InterPro" id="IPR001648">
    <property type="entry name" value="Ribosomal_bS18"/>
</dbReference>
<dbReference type="InterPro" id="IPR018275">
    <property type="entry name" value="Ribosomal_bS18_CS"/>
</dbReference>
<dbReference type="InterPro" id="IPR036870">
    <property type="entry name" value="Ribosomal_bS18_sf"/>
</dbReference>
<dbReference type="NCBIfam" id="TIGR00165">
    <property type="entry name" value="S18"/>
    <property type="match status" value="1"/>
</dbReference>
<dbReference type="PANTHER" id="PTHR13479">
    <property type="entry name" value="30S RIBOSOMAL PROTEIN S18"/>
    <property type="match status" value="1"/>
</dbReference>
<dbReference type="PANTHER" id="PTHR13479:SF40">
    <property type="entry name" value="SMALL RIBOSOMAL SUBUNIT PROTEIN BS18M"/>
    <property type="match status" value="1"/>
</dbReference>
<dbReference type="Pfam" id="PF01084">
    <property type="entry name" value="Ribosomal_S18"/>
    <property type="match status" value="1"/>
</dbReference>
<dbReference type="PRINTS" id="PR00974">
    <property type="entry name" value="RIBOSOMALS18"/>
</dbReference>
<dbReference type="SUPFAM" id="SSF46911">
    <property type="entry name" value="Ribosomal protein S18"/>
    <property type="match status" value="1"/>
</dbReference>
<dbReference type="PROSITE" id="PS00057">
    <property type="entry name" value="RIBOSOMAL_S18"/>
    <property type="match status" value="1"/>
</dbReference>
<proteinExistence type="inferred from homology"/>
<protein>
    <recommendedName>
        <fullName evidence="1">Small ribosomal subunit protein bS18</fullName>
    </recommendedName>
    <alternativeName>
        <fullName evidence="2">30S ribosomal protein S18</fullName>
    </alternativeName>
</protein>
<feature type="chain" id="PRO_0000111224" description="Small ribosomal subunit protein bS18">
    <location>
        <begin position="1"/>
        <end position="80"/>
    </location>
</feature>
<comment type="function">
    <text evidence="1">Binds as a heterodimer with protein bS6 to the central domain of the 16S rRNA, where it helps stabilize the platform of the 30S subunit.</text>
</comment>
<comment type="subunit">
    <text evidence="1">Part of the 30S ribosomal subunit. Forms a tight heterodimer with protein bS6.</text>
</comment>
<comment type="similarity">
    <text evidence="1">Belongs to the bacterial ribosomal protein bS18 family.</text>
</comment>
<sequence>MAGGPRRGGRRRKKVCYFTANGITHIDYKDTELLKRFISERGKILPRRVTGTSAKYQRMLTTAIKRSRHMALLPYVKEEQ</sequence>
<evidence type="ECO:0000255" key="1">
    <source>
        <dbReference type="HAMAP-Rule" id="MF_00270"/>
    </source>
</evidence>
<evidence type="ECO:0000305" key="2"/>
<keyword id="KW-0687">Ribonucleoprotein</keyword>
<keyword id="KW-0689">Ribosomal protein</keyword>
<keyword id="KW-0694">RNA-binding</keyword>
<keyword id="KW-0699">rRNA-binding</keyword>
<gene>
    <name evidence="1" type="primary">rpsR</name>
    <name type="ordered locus">SACOL0439</name>
</gene>
<reference key="1">
    <citation type="journal article" date="2005" name="J. Bacteriol.">
        <title>Insights on evolution of virulence and resistance from the complete genome analysis of an early methicillin-resistant Staphylococcus aureus strain and a biofilm-producing methicillin-resistant Staphylococcus epidermidis strain.</title>
        <authorList>
            <person name="Gill S.R."/>
            <person name="Fouts D.E."/>
            <person name="Archer G.L."/>
            <person name="Mongodin E.F."/>
            <person name="DeBoy R.T."/>
            <person name="Ravel J."/>
            <person name="Paulsen I.T."/>
            <person name="Kolonay J.F."/>
            <person name="Brinkac L.M."/>
            <person name="Beanan M.J."/>
            <person name="Dodson R.J."/>
            <person name="Daugherty S.C."/>
            <person name="Madupu R."/>
            <person name="Angiuoli S.V."/>
            <person name="Durkin A.S."/>
            <person name="Haft D.H."/>
            <person name="Vamathevan J.J."/>
            <person name="Khouri H."/>
            <person name="Utterback T.R."/>
            <person name="Lee C."/>
            <person name="Dimitrov G."/>
            <person name="Jiang L."/>
            <person name="Qin H."/>
            <person name="Weidman J."/>
            <person name="Tran K."/>
            <person name="Kang K.H."/>
            <person name="Hance I.R."/>
            <person name="Nelson K.E."/>
            <person name="Fraser C.M."/>
        </authorList>
    </citation>
    <scope>NUCLEOTIDE SEQUENCE [LARGE SCALE GENOMIC DNA]</scope>
    <source>
        <strain>COL</strain>
    </source>
</reference>
<organism>
    <name type="scientific">Staphylococcus aureus (strain COL)</name>
    <dbReference type="NCBI Taxonomy" id="93062"/>
    <lineage>
        <taxon>Bacteria</taxon>
        <taxon>Bacillati</taxon>
        <taxon>Bacillota</taxon>
        <taxon>Bacilli</taxon>
        <taxon>Bacillales</taxon>
        <taxon>Staphylococcaceae</taxon>
        <taxon>Staphylococcus</taxon>
    </lineage>
</organism>